<feature type="chain" id="PRO_0000248582" description="Deoxyhypusine hydroxylase">
    <location>
        <begin position="1"/>
        <end position="302"/>
    </location>
</feature>
<feature type="repeat" description="HEAT-like PBS-type 1">
    <location>
        <begin position="23"/>
        <end position="49"/>
    </location>
</feature>
<feature type="repeat" description="HEAT-like PBS-type 2">
    <location>
        <begin position="54"/>
        <end position="80"/>
    </location>
</feature>
<feature type="repeat" description="HEAT-like PBS-type 3">
    <location>
        <begin position="87"/>
        <end position="113"/>
    </location>
</feature>
<feature type="repeat" description="HEAT-like PBS-type 4">
    <location>
        <begin position="175"/>
        <end position="201"/>
    </location>
</feature>
<feature type="repeat" description="HEAT-like PBS-type 5">
    <location>
        <begin position="206"/>
        <end position="232"/>
    </location>
</feature>
<feature type="repeat" description="HEAT-like PBS-type 6">
    <location>
        <begin position="239"/>
        <end position="265"/>
    </location>
</feature>
<feature type="binding site" evidence="1">
    <location>
        <position position="56"/>
    </location>
    <ligand>
        <name>Fe cation</name>
        <dbReference type="ChEBI" id="CHEBI:24875"/>
        <label>1</label>
    </ligand>
</feature>
<feature type="binding site" evidence="1">
    <location>
        <position position="57"/>
    </location>
    <ligand>
        <name>Fe cation</name>
        <dbReference type="ChEBI" id="CHEBI:24875"/>
        <label>1</label>
    </ligand>
</feature>
<feature type="binding site" evidence="1">
    <location>
        <position position="89"/>
    </location>
    <ligand>
        <name>Fe cation</name>
        <dbReference type="ChEBI" id="CHEBI:24875"/>
        <label>1</label>
    </ligand>
</feature>
<feature type="binding site" evidence="1">
    <location>
        <position position="90"/>
    </location>
    <ligand>
        <name>Fe cation</name>
        <dbReference type="ChEBI" id="CHEBI:24875"/>
        <label>1</label>
    </ligand>
</feature>
<feature type="binding site" evidence="1">
    <location>
        <position position="208"/>
    </location>
    <ligand>
        <name>Fe cation</name>
        <dbReference type="ChEBI" id="CHEBI:24875"/>
        <label>2</label>
    </ligand>
</feature>
<feature type="binding site" evidence="1">
    <location>
        <position position="209"/>
    </location>
    <ligand>
        <name>Fe cation</name>
        <dbReference type="ChEBI" id="CHEBI:24875"/>
        <label>2</label>
    </ligand>
</feature>
<feature type="binding site" evidence="1">
    <location>
        <position position="241"/>
    </location>
    <ligand>
        <name>Fe cation</name>
        <dbReference type="ChEBI" id="CHEBI:24875"/>
        <label>2</label>
    </ligand>
</feature>
<feature type="binding site" evidence="1">
    <location>
        <position position="242"/>
    </location>
    <ligand>
        <name>Fe cation</name>
        <dbReference type="ChEBI" id="CHEBI:24875"/>
        <label>2</label>
    </ligand>
</feature>
<name>DOHH_DROME</name>
<accession>Q9V9U4</accession>
<comment type="function">
    <text evidence="1 3">Catalyzes the hydroxylation of the N(6)-(4-aminobutyl)-L-lysine intermediate to form hypusine, an essential post-translational modification only found in mature eIF-5A factor (By similarity). Essential for organismal viability and plays a role in a wide number of important processes such as cell growth and proliferation, and regulates induction of autophagy and protein synthesis. Has a role in eIF-5A-mediated translational control.</text>
</comment>
<comment type="catalytic activity">
    <reaction evidence="1">
        <text>[eIF5A protein]-deoxyhypusine + AH2 + O2 = [eIF5A protein]-hypusine + A + H2O</text>
        <dbReference type="Rhea" id="RHEA:14101"/>
        <dbReference type="Rhea" id="RHEA-COMP:10144"/>
        <dbReference type="Rhea" id="RHEA-COMP:12592"/>
        <dbReference type="ChEBI" id="CHEBI:13193"/>
        <dbReference type="ChEBI" id="CHEBI:15377"/>
        <dbReference type="ChEBI" id="CHEBI:15379"/>
        <dbReference type="ChEBI" id="CHEBI:17499"/>
        <dbReference type="ChEBI" id="CHEBI:82657"/>
        <dbReference type="ChEBI" id="CHEBI:91175"/>
        <dbReference type="EC" id="1.14.99.29"/>
    </reaction>
</comment>
<comment type="cofactor">
    <cofactor evidence="1">
        <name>Fe(2+)</name>
        <dbReference type="ChEBI" id="CHEBI:29033"/>
    </cofactor>
    <text evidence="1">Binds 2 Fe(2+) ions per subunit.</text>
</comment>
<comment type="pathway">
    <text evidence="1">Protein modification; eIF5A hypusination.</text>
</comment>
<comment type="subcellular location">
    <subcellularLocation>
        <location evidence="1 3">Endoplasmic reticulum membrane</location>
        <topology evidence="1 3">Peripheral membrane protein</topology>
        <orientation evidence="1 3">Cytoplasmic side</orientation>
    </subcellularLocation>
    <text>In larval imaginal disk and Garland cells.</text>
</comment>
<comment type="disruption phenotype">
    <text evidence="2 3">Lethality. Mutant clones exhibit bristle loss as well as very small bristles on the thorax. Mutations affect cell and organ size, bromodeoxyuridine incorporation and autophagy.</text>
</comment>
<comment type="similarity">
    <text evidence="1">Belongs to the deoxyhypusine hydroxylase family.</text>
</comment>
<gene>
    <name evidence="1" type="primary">nero</name>
    <name type="synonym">l(3)s1921</name>
    <name type="ORF">CG2245</name>
</gene>
<sequence length="302" mass="33564">MVSQQQIEAIGGVLNNKERPLKERFRALFTLKNIGGGAAIEAISKAFDDDSALLKHELAYCLGQMQDAQALDILTKVLKDTTQEPMVRHEAAEAMGAIGHPDVLPILEEYKQDPVVEVAETCAIALDRVRWLQSGQKVDDSNPYASVDPSPPTAGDKSVTELKAIYLDAQQSLFDRYRAMFSLRNLRTEESVLAIAEGLKDSSALFRHEVAFVLGQLQEPCSIPFLQENLEDRLENEMVRHECAEALGAIATEDCIQILNRYAEDDKRVVKESCVIALDMCEYENSPEFQYADGLAKLDATK</sequence>
<reference key="1">
    <citation type="journal article" date="2000" name="Science">
        <title>The genome sequence of Drosophila melanogaster.</title>
        <authorList>
            <person name="Adams M.D."/>
            <person name="Celniker S.E."/>
            <person name="Holt R.A."/>
            <person name="Evans C.A."/>
            <person name="Gocayne J.D."/>
            <person name="Amanatides P.G."/>
            <person name="Scherer S.E."/>
            <person name="Li P.W."/>
            <person name="Hoskins R.A."/>
            <person name="Galle R.F."/>
            <person name="George R.A."/>
            <person name="Lewis S.E."/>
            <person name="Richards S."/>
            <person name="Ashburner M."/>
            <person name="Henderson S.N."/>
            <person name="Sutton G.G."/>
            <person name="Wortman J.R."/>
            <person name="Yandell M.D."/>
            <person name="Zhang Q."/>
            <person name="Chen L.X."/>
            <person name="Brandon R.C."/>
            <person name="Rogers Y.-H.C."/>
            <person name="Blazej R.G."/>
            <person name="Champe M."/>
            <person name="Pfeiffer B.D."/>
            <person name="Wan K.H."/>
            <person name="Doyle C."/>
            <person name="Baxter E.G."/>
            <person name="Helt G."/>
            <person name="Nelson C.R."/>
            <person name="Miklos G.L.G."/>
            <person name="Abril J.F."/>
            <person name="Agbayani A."/>
            <person name="An H.-J."/>
            <person name="Andrews-Pfannkoch C."/>
            <person name="Baldwin D."/>
            <person name="Ballew R.M."/>
            <person name="Basu A."/>
            <person name="Baxendale J."/>
            <person name="Bayraktaroglu L."/>
            <person name="Beasley E.M."/>
            <person name="Beeson K.Y."/>
            <person name="Benos P.V."/>
            <person name="Berman B.P."/>
            <person name="Bhandari D."/>
            <person name="Bolshakov S."/>
            <person name="Borkova D."/>
            <person name="Botchan M.R."/>
            <person name="Bouck J."/>
            <person name="Brokstein P."/>
            <person name="Brottier P."/>
            <person name="Burtis K.C."/>
            <person name="Busam D.A."/>
            <person name="Butler H."/>
            <person name="Cadieu E."/>
            <person name="Center A."/>
            <person name="Chandra I."/>
            <person name="Cherry J.M."/>
            <person name="Cawley S."/>
            <person name="Dahlke C."/>
            <person name="Davenport L.B."/>
            <person name="Davies P."/>
            <person name="de Pablos B."/>
            <person name="Delcher A."/>
            <person name="Deng Z."/>
            <person name="Mays A.D."/>
            <person name="Dew I."/>
            <person name="Dietz S.M."/>
            <person name="Dodson K."/>
            <person name="Doup L.E."/>
            <person name="Downes M."/>
            <person name="Dugan-Rocha S."/>
            <person name="Dunkov B.C."/>
            <person name="Dunn P."/>
            <person name="Durbin K.J."/>
            <person name="Evangelista C.C."/>
            <person name="Ferraz C."/>
            <person name="Ferriera S."/>
            <person name="Fleischmann W."/>
            <person name="Fosler C."/>
            <person name="Gabrielian A.E."/>
            <person name="Garg N.S."/>
            <person name="Gelbart W.M."/>
            <person name="Glasser K."/>
            <person name="Glodek A."/>
            <person name="Gong F."/>
            <person name="Gorrell J.H."/>
            <person name="Gu Z."/>
            <person name="Guan P."/>
            <person name="Harris M."/>
            <person name="Harris N.L."/>
            <person name="Harvey D.A."/>
            <person name="Heiman T.J."/>
            <person name="Hernandez J.R."/>
            <person name="Houck J."/>
            <person name="Hostin D."/>
            <person name="Houston K.A."/>
            <person name="Howland T.J."/>
            <person name="Wei M.-H."/>
            <person name="Ibegwam C."/>
            <person name="Jalali M."/>
            <person name="Kalush F."/>
            <person name="Karpen G.H."/>
            <person name="Ke Z."/>
            <person name="Kennison J.A."/>
            <person name="Ketchum K.A."/>
            <person name="Kimmel B.E."/>
            <person name="Kodira C.D."/>
            <person name="Kraft C.L."/>
            <person name="Kravitz S."/>
            <person name="Kulp D."/>
            <person name="Lai Z."/>
            <person name="Lasko P."/>
            <person name="Lei Y."/>
            <person name="Levitsky A.A."/>
            <person name="Li J.H."/>
            <person name="Li Z."/>
            <person name="Liang Y."/>
            <person name="Lin X."/>
            <person name="Liu X."/>
            <person name="Mattei B."/>
            <person name="McIntosh T.C."/>
            <person name="McLeod M.P."/>
            <person name="McPherson D."/>
            <person name="Merkulov G."/>
            <person name="Milshina N.V."/>
            <person name="Mobarry C."/>
            <person name="Morris J."/>
            <person name="Moshrefi A."/>
            <person name="Mount S.M."/>
            <person name="Moy M."/>
            <person name="Murphy B."/>
            <person name="Murphy L."/>
            <person name="Muzny D.M."/>
            <person name="Nelson D.L."/>
            <person name="Nelson D.R."/>
            <person name="Nelson K.A."/>
            <person name="Nixon K."/>
            <person name="Nusskern D.R."/>
            <person name="Pacleb J.M."/>
            <person name="Palazzolo M."/>
            <person name="Pittman G.S."/>
            <person name="Pan S."/>
            <person name="Pollard J."/>
            <person name="Puri V."/>
            <person name="Reese M.G."/>
            <person name="Reinert K."/>
            <person name="Remington K."/>
            <person name="Saunders R.D.C."/>
            <person name="Scheeler F."/>
            <person name="Shen H."/>
            <person name="Shue B.C."/>
            <person name="Siden-Kiamos I."/>
            <person name="Simpson M."/>
            <person name="Skupski M.P."/>
            <person name="Smith T.J."/>
            <person name="Spier E."/>
            <person name="Spradling A.C."/>
            <person name="Stapleton M."/>
            <person name="Strong R."/>
            <person name="Sun E."/>
            <person name="Svirskas R."/>
            <person name="Tector C."/>
            <person name="Turner R."/>
            <person name="Venter E."/>
            <person name="Wang A.H."/>
            <person name="Wang X."/>
            <person name="Wang Z.-Y."/>
            <person name="Wassarman D.A."/>
            <person name="Weinstock G.M."/>
            <person name="Weissenbach J."/>
            <person name="Williams S.M."/>
            <person name="Woodage T."/>
            <person name="Worley K.C."/>
            <person name="Wu D."/>
            <person name="Yang S."/>
            <person name="Yao Q.A."/>
            <person name="Ye J."/>
            <person name="Yeh R.-F."/>
            <person name="Zaveri J.S."/>
            <person name="Zhan M."/>
            <person name="Zhang G."/>
            <person name="Zhao Q."/>
            <person name="Zheng L."/>
            <person name="Zheng X.H."/>
            <person name="Zhong F.N."/>
            <person name="Zhong W."/>
            <person name="Zhou X."/>
            <person name="Zhu S.C."/>
            <person name="Zhu X."/>
            <person name="Smith H.O."/>
            <person name="Gibbs R.A."/>
            <person name="Myers E.W."/>
            <person name="Rubin G.M."/>
            <person name="Venter J.C."/>
        </authorList>
    </citation>
    <scope>NUCLEOTIDE SEQUENCE [LARGE SCALE GENOMIC DNA]</scope>
    <source>
        <strain>Berkeley</strain>
    </source>
</reference>
<reference key="2">
    <citation type="journal article" date="2002" name="Genome Biol.">
        <title>Annotation of the Drosophila melanogaster euchromatic genome: a systematic review.</title>
        <authorList>
            <person name="Misra S."/>
            <person name="Crosby M.A."/>
            <person name="Mungall C.J."/>
            <person name="Matthews B.B."/>
            <person name="Campbell K.S."/>
            <person name="Hradecky P."/>
            <person name="Huang Y."/>
            <person name="Kaminker J.S."/>
            <person name="Millburn G.H."/>
            <person name="Prochnik S.E."/>
            <person name="Smith C.D."/>
            <person name="Tupy J.L."/>
            <person name="Whitfield E.J."/>
            <person name="Bayraktaroglu L."/>
            <person name="Berman B.P."/>
            <person name="Bettencourt B.R."/>
            <person name="Celniker S.E."/>
            <person name="de Grey A.D.N.J."/>
            <person name="Drysdale R.A."/>
            <person name="Harris N.L."/>
            <person name="Richter J."/>
            <person name="Russo S."/>
            <person name="Schroeder A.J."/>
            <person name="Shu S.Q."/>
            <person name="Stapleton M."/>
            <person name="Yamada C."/>
            <person name="Ashburner M."/>
            <person name="Gelbart W.M."/>
            <person name="Rubin G.M."/>
            <person name="Lewis S.E."/>
        </authorList>
    </citation>
    <scope>GENOME REANNOTATION</scope>
    <source>
        <strain>Berkeley</strain>
    </source>
</reference>
<reference key="3">
    <citation type="journal article" date="2002" name="Genome Biol.">
        <title>A Drosophila full-length cDNA resource.</title>
        <authorList>
            <person name="Stapleton M."/>
            <person name="Carlson J.W."/>
            <person name="Brokstein P."/>
            <person name="Yu C."/>
            <person name="Champe M."/>
            <person name="George R.A."/>
            <person name="Guarin H."/>
            <person name="Kronmiller B."/>
            <person name="Pacleb J.M."/>
            <person name="Park S."/>
            <person name="Wan K.H."/>
            <person name="Rubin G.M."/>
            <person name="Celniker S.E."/>
        </authorList>
    </citation>
    <scope>NUCLEOTIDE SEQUENCE [LARGE SCALE MRNA]</scope>
    <source>
        <strain>Berkeley</strain>
        <tissue>Embryo</tissue>
    </source>
</reference>
<reference key="4">
    <citation type="journal article" date="1999" name="Genetics">
        <title>The Berkeley Drosophila Genome Project gene disruption project: single P-element insertions mutating 25% of vital Drosophila genes.</title>
        <authorList>
            <person name="Spradling A.C."/>
            <person name="Stern D."/>
            <person name="Beaton A."/>
            <person name="Rhem E.J."/>
            <person name="Laverty T."/>
            <person name="Mozden N."/>
            <person name="Misra S."/>
            <person name="Rubin G.M."/>
        </authorList>
    </citation>
    <scope>DISRUPTION PHENOTYPE</scope>
</reference>
<reference key="5">
    <citation type="journal article" date="2009" name="J. Cell Biol.">
        <title>The Drosophila deoxyhypusine hydroxylase homologue nero and its target eIF5A are required for cell growth and the regulation of autophagy.</title>
        <authorList>
            <person name="Patel P.H."/>
            <person name="Costa-Mattioli M."/>
            <person name="Schulze K.L."/>
            <person name="Bellen H.J."/>
        </authorList>
    </citation>
    <scope>FUNCTION</scope>
    <scope>SUBCELLULAR LOCATION</scope>
    <scope>DISRUPTION PHENOTYPE</scope>
</reference>
<proteinExistence type="evidence at transcript level"/>
<protein>
    <recommendedName>
        <fullName evidence="1">Deoxyhypusine hydroxylase</fullName>
        <shortName evidence="1">DOHH</shortName>
        <ecNumber evidence="1">1.14.99.29</ecNumber>
    </recommendedName>
    <alternativeName>
        <fullName evidence="1">Deoxyhypusine dioxygenase</fullName>
    </alternativeName>
    <alternativeName>
        <fullName evidence="1">Deoxyhypusine monooxygenase</fullName>
    </alternativeName>
</protein>
<dbReference type="EC" id="1.14.99.29" evidence="1"/>
<dbReference type="EMBL" id="AE014297">
    <property type="protein sequence ID" value="AAF57189.1"/>
    <property type="molecule type" value="Genomic_DNA"/>
</dbReference>
<dbReference type="EMBL" id="AY118500">
    <property type="protein sequence ID" value="AAM49869.1"/>
    <property type="molecule type" value="mRNA"/>
</dbReference>
<dbReference type="RefSeq" id="NP_651887.1">
    <property type="nucleotide sequence ID" value="NM_143630.2"/>
</dbReference>
<dbReference type="SMR" id="Q9V9U4"/>
<dbReference type="BioGRID" id="68581">
    <property type="interactions" value="3"/>
</dbReference>
<dbReference type="FunCoup" id="Q9V9U4">
    <property type="interactions" value="1258"/>
</dbReference>
<dbReference type="IntAct" id="Q9V9U4">
    <property type="interactions" value="1"/>
</dbReference>
<dbReference type="STRING" id="7227.FBpp0085222"/>
<dbReference type="PaxDb" id="7227-FBpp0085222"/>
<dbReference type="DNASU" id="43740"/>
<dbReference type="EnsemblMetazoa" id="FBtr0085863">
    <property type="protein sequence ID" value="FBpp0085222"/>
    <property type="gene ID" value="FBgn0261479"/>
</dbReference>
<dbReference type="GeneID" id="43740"/>
<dbReference type="KEGG" id="dme:Dmel_CG2245"/>
<dbReference type="AGR" id="FB:FBgn0261479"/>
<dbReference type="CTD" id="43740"/>
<dbReference type="FlyBase" id="FBgn0261479">
    <property type="gene designation" value="nero"/>
</dbReference>
<dbReference type="VEuPathDB" id="VectorBase:FBgn0261479"/>
<dbReference type="eggNOG" id="KOG0567">
    <property type="taxonomic scope" value="Eukaryota"/>
</dbReference>
<dbReference type="GeneTree" id="ENSGT00940000165304"/>
<dbReference type="HOGENOM" id="CLU_053974_0_0_1"/>
<dbReference type="InParanoid" id="Q9V9U4"/>
<dbReference type="OMA" id="LQEPCSI"/>
<dbReference type="OrthoDB" id="421002at2759"/>
<dbReference type="PhylomeDB" id="Q9V9U4"/>
<dbReference type="Reactome" id="R-DME-204626">
    <property type="pathway name" value="Hypusine synthesis from eIF5A-lysine"/>
</dbReference>
<dbReference type="UniPathway" id="UPA00354"/>
<dbReference type="BioGRID-ORCS" id="43740">
    <property type="hits" value="1 hit in 1 CRISPR screen"/>
</dbReference>
<dbReference type="GenomeRNAi" id="43740"/>
<dbReference type="PRO" id="PR:Q9V9U4"/>
<dbReference type="Proteomes" id="UP000000803">
    <property type="component" value="Chromosome 3R"/>
</dbReference>
<dbReference type="Bgee" id="FBgn0261479">
    <property type="expression patterns" value="Expressed in spermatocyte in testis and 118 other cell types or tissues"/>
</dbReference>
<dbReference type="GO" id="GO:0005789">
    <property type="term" value="C:endoplasmic reticulum membrane"/>
    <property type="evidence" value="ECO:0000314"/>
    <property type="project" value="UniProtKB"/>
</dbReference>
<dbReference type="GO" id="GO:0042406">
    <property type="term" value="C:extrinsic component of endoplasmic reticulum membrane"/>
    <property type="evidence" value="ECO:0007669"/>
    <property type="project" value="UniProtKB-UniRule"/>
</dbReference>
<dbReference type="GO" id="GO:0019135">
    <property type="term" value="F:deoxyhypusine monooxygenase activity"/>
    <property type="evidence" value="ECO:0000316"/>
    <property type="project" value="UniProtKB"/>
</dbReference>
<dbReference type="GO" id="GO:0046872">
    <property type="term" value="F:metal ion binding"/>
    <property type="evidence" value="ECO:0007669"/>
    <property type="project" value="UniProtKB-KW"/>
</dbReference>
<dbReference type="GO" id="GO:0008612">
    <property type="term" value="P:peptidyl-lysine modification to peptidyl-hypusine"/>
    <property type="evidence" value="ECO:0000316"/>
    <property type="project" value="UniProtKB"/>
</dbReference>
<dbReference type="FunFam" id="1.25.10.10:FF:000099">
    <property type="entry name" value="Deoxyhypusine hydroxylase"/>
    <property type="match status" value="2"/>
</dbReference>
<dbReference type="Gene3D" id="1.25.10.10">
    <property type="entry name" value="Leucine-rich Repeat Variant"/>
    <property type="match status" value="2"/>
</dbReference>
<dbReference type="HAMAP" id="MF_03101">
    <property type="entry name" value="Deoxyhypusine_hydroxylase"/>
    <property type="match status" value="1"/>
</dbReference>
<dbReference type="InterPro" id="IPR011989">
    <property type="entry name" value="ARM-like"/>
</dbReference>
<dbReference type="InterPro" id="IPR016024">
    <property type="entry name" value="ARM-type_fold"/>
</dbReference>
<dbReference type="InterPro" id="IPR027517">
    <property type="entry name" value="Deoxyhypusine_hydroxylase"/>
</dbReference>
<dbReference type="InterPro" id="IPR004155">
    <property type="entry name" value="PBS_lyase_HEAT"/>
</dbReference>
<dbReference type="PANTHER" id="PTHR12697:SF5">
    <property type="entry name" value="DEOXYHYPUSINE HYDROXYLASE"/>
    <property type="match status" value="1"/>
</dbReference>
<dbReference type="PANTHER" id="PTHR12697">
    <property type="entry name" value="PBS LYASE HEAT-LIKE PROTEIN"/>
    <property type="match status" value="1"/>
</dbReference>
<dbReference type="Pfam" id="PF13646">
    <property type="entry name" value="HEAT_2"/>
    <property type="match status" value="2"/>
</dbReference>
<dbReference type="SMART" id="SM00567">
    <property type="entry name" value="EZ_HEAT"/>
    <property type="match status" value="6"/>
</dbReference>
<dbReference type="SUPFAM" id="SSF48371">
    <property type="entry name" value="ARM repeat"/>
    <property type="match status" value="1"/>
</dbReference>
<keyword id="KW-0256">Endoplasmic reticulum</keyword>
<keyword id="KW-0386">Hypusine biosynthesis</keyword>
<keyword id="KW-0408">Iron</keyword>
<keyword id="KW-0472">Membrane</keyword>
<keyword id="KW-0479">Metal-binding</keyword>
<keyword id="KW-0503">Monooxygenase</keyword>
<keyword id="KW-0560">Oxidoreductase</keyword>
<keyword id="KW-1185">Reference proteome</keyword>
<keyword id="KW-0677">Repeat</keyword>
<evidence type="ECO:0000255" key="1">
    <source>
        <dbReference type="HAMAP-Rule" id="MF_03101"/>
    </source>
</evidence>
<evidence type="ECO:0000269" key="2">
    <source>
    </source>
</evidence>
<evidence type="ECO:0000269" key="3">
    <source>
    </source>
</evidence>
<organism>
    <name type="scientific">Drosophila melanogaster</name>
    <name type="common">Fruit fly</name>
    <dbReference type="NCBI Taxonomy" id="7227"/>
    <lineage>
        <taxon>Eukaryota</taxon>
        <taxon>Metazoa</taxon>
        <taxon>Ecdysozoa</taxon>
        <taxon>Arthropoda</taxon>
        <taxon>Hexapoda</taxon>
        <taxon>Insecta</taxon>
        <taxon>Pterygota</taxon>
        <taxon>Neoptera</taxon>
        <taxon>Endopterygota</taxon>
        <taxon>Diptera</taxon>
        <taxon>Brachycera</taxon>
        <taxon>Muscomorpha</taxon>
        <taxon>Ephydroidea</taxon>
        <taxon>Drosophilidae</taxon>
        <taxon>Drosophila</taxon>
        <taxon>Sophophora</taxon>
    </lineage>
</organism>